<reference evidence="4" key="1">
    <citation type="journal article" date="2007" name="Nature">
        <title>Evolution of genes and genomes on the Drosophila phylogeny.</title>
        <authorList>
            <consortium name="Drosophila 12 genomes consortium"/>
        </authorList>
    </citation>
    <scope>NUCLEOTIDE SEQUENCE [LARGE SCALE GENOMIC DNA]</scope>
    <source>
        <strain evidence="4">Tucson 15081-1352.22</strain>
    </source>
</reference>
<proteinExistence type="inferred from homology"/>
<organism>
    <name type="scientific">Drosophila mojavensis</name>
    <name type="common">Fruit fly</name>
    <dbReference type="NCBI Taxonomy" id="7230"/>
    <lineage>
        <taxon>Eukaryota</taxon>
        <taxon>Metazoa</taxon>
        <taxon>Ecdysozoa</taxon>
        <taxon>Arthropoda</taxon>
        <taxon>Hexapoda</taxon>
        <taxon>Insecta</taxon>
        <taxon>Pterygota</taxon>
        <taxon>Neoptera</taxon>
        <taxon>Endopterygota</taxon>
        <taxon>Diptera</taxon>
        <taxon>Brachycera</taxon>
        <taxon>Muscomorpha</taxon>
        <taxon>Ephydroidea</taxon>
        <taxon>Drosophilidae</taxon>
        <taxon>Drosophila</taxon>
    </lineage>
</organism>
<gene>
    <name evidence="1" type="primary">Jupiter</name>
    <name type="ORF">GI23754</name>
</gene>
<name>JUPIT_DROMO</name>
<feature type="chain" id="PRO_0000355129" description="Microtubule-associated protein Jupiter">
    <location>
        <begin position="1"/>
        <end position="203"/>
    </location>
</feature>
<feature type="region of interest" description="Disordered" evidence="2">
    <location>
        <begin position="123"/>
        <end position="163"/>
    </location>
</feature>
<feature type="region of interest" description="Disordered" evidence="2">
    <location>
        <begin position="182"/>
        <end position="203"/>
    </location>
</feature>
<feature type="compositionally biased region" description="Polar residues" evidence="2">
    <location>
        <begin position="123"/>
        <end position="132"/>
    </location>
</feature>
<feature type="compositionally biased region" description="Low complexity" evidence="2">
    <location>
        <begin position="133"/>
        <end position="146"/>
    </location>
</feature>
<feature type="modified residue" description="Phosphoserine" evidence="1">
    <location>
        <position position="30"/>
    </location>
</feature>
<feature type="modified residue" description="Phosphothreonine" evidence="1">
    <location>
        <position position="41"/>
    </location>
</feature>
<feature type="modified residue" description="Phosphothreonine" evidence="1">
    <location>
        <position position="102"/>
    </location>
</feature>
<feature type="modified residue" description="Phosphoserine" evidence="1">
    <location>
        <position position="135"/>
    </location>
</feature>
<feature type="modified residue" description="Phosphoserine" evidence="1">
    <location>
        <position position="146"/>
    </location>
</feature>
<comment type="function">
    <text evidence="1">Binds to all microtubule populations.</text>
</comment>
<comment type="subcellular location">
    <subcellularLocation>
        <location evidence="1">Nucleus</location>
    </subcellularLocation>
    <subcellularLocation>
        <location evidence="1">Cytoplasm</location>
    </subcellularLocation>
    <subcellularLocation>
        <location evidence="1">Cytoplasm</location>
        <location evidence="1">Cytoskeleton</location>
    </subcellularLocation>
    <subcellularLocation>
        <location evidence="1">Cytoplasm</location>
        <location evidence="1">Cytoskeleton</location>
        <location evidence="1">Spindle</location>
    </subcellularLocation>
</comment>
<comment type="similarity">
    <text evidence="3">Belongs to the MAP Jupiter family.</text>
</comment>
<keyword id="KW-0963">Cytoplasm</keyword>
<keyword id="KW-0206">Cytoskeleton</keyword>
<keyword id="KW-0493">Microtubule</keyword>
<keyword id="KW-0539">Nucleus</keyword>
<keyword id="KW-0597">Phosphoprotein</keyword>
<keyword id="KW-1185">Reference proteome</keyword>
<protein>
    <recommendedName>
        <fullName evidence="1">Microtubule-associated protein Jupiter</fullName>
    </recommendedName>
</protein>
<accession>B4KBL1</accession>
<evidence type="ECO:0000250" key="1">
    <source>
        <dbReference type="UniProtKB" id="Q9I7K0"/>
    </source>
</evidence>
<evidence type="ECO:0000256" key="2">
    <source>
        <dbReference type="SAM" id="MobiDB-lite"/>
    </source>
</evidence>
<evidence type="ECO:0000305" key="3"/>
<evidence type="ECO:0000312" key="4">
    <source>
        <dbReference type="EMBL" id="EDW13678.1"/>
    </source>
</evidence>
<dbReference type="EMBL" id="CH933806">
    <property type="protein sequence ID" value="EDW13678.1"/>
    <property type="molecule type" value="Genomic_DNA"/>
</dbReference>
<dbReference type="FunCoup" id="B4KBL1">
    <property type="interactions" value="148"/>
</dbReference>
<dbReference type="EnsemblMetazoa" id="FBtr0174479">
    <property type="protein sequence ID" value="FBpp0172971"/>
    <property type="gene ID" value="FBgn0146479"/>
</dbReference>
<dbReference type="EnsemblMetazoa" id="XM_001998181.4">
    <property type="protein sequence ID" value="XP_001998217.1"/>
    <property type="gene ID" value="LOC6572064"/>
</dbReference>
<dbReference type="GeneID" id="6572064"/>
<dbReference type="CTD" id="41392"/>
<dbReference type="eggNOG" id="ENOG502S7TC">
    <property type="taxonomic scope" value="Eukaryota"/>
</dbReference>
<dbReference type="HOGENOM" id="CLU_076719_0_0_1"/>
<dbReference type="InParanoid" id="B4KBL1"/>
<dbReference type="OMA" id="GANDFHQ"/>
<dbReference type="OrthoDB" id="6367565at2759"/>
<dbReference type="PhylomeDB" id="B4KBL1"/>
<dbReference type="ChiTaRS" id="Jupiter">
    <property type="organism name" value="fly"/>
</dbReference>
<dbReference type="Proteomes" id="UP000009192">
    <property type="component" value="Unassembled WGS sequence"/>
</dbReference>
<dbReference type="GO" id="GO:0005829">
    <property type="term" value="C:cytosol"/>
    <property type="evidence" value="ECO:0000250"/>
    <property type="project" value="UniProtKB"/>
</dbReference>
<dbReference type="GO" id="GO:0005874">
    <property type="term" value="C:microtubule"/>
    <property type="evidence" value="ECO:0007669"/>
    <property type="project" value="UniProtKB-KW"/>
</dbReference>
<dbReference type="GO" id="GO:0005875">
    <property type="term" value="C:microtubule associated complex"/>
    <property type="evidence" value="ECO:0000250"/>
    <property type="project" value="UniProtKB"/>
</dbReference>
<dbReference type="GO" id="GO:0005634">
    <property type="term" value="C:nucleus"/>
    <property type="evidence" value="ECO:0000250"/>
    <property type="project" value="UniProtKB"/>
</dbReference>
<dbReference type="GO" id="GO:0005819">
    <property type="term" value="C:spindle"/>
    <property type="evidence" value="ECO:0007669"/>
    <property type="project" value="UniProtKB-SubCell"/>
</dbReference>
<dbReference type="GO" id="GO:0008017">
    <property type="term" value="F:microtubule binding"/>
    <property type="evidence" value="ECO:0000250"/>
    <property type="project" value="UniProtKB"/>
</dbReference>
<dbReference type="GO" id="GO:0005200">
    <property type="term" value="F:structural constituent of cytoskeleton"/>
    <property type="evidence" value="ECO:0000250"/>
    <property type="project" value="UniProtKB"/>
</dbReference>
<dbReference type="GO" id="GO:0031116">
    <property type="term" value="P:positive regulation of microtubule polymerization"/>
    <property type="evidence" value="ECO:0000250"/>
    <property type="project" value="UniProtKB"/>
</dbReference>
<dbReference type="InterPro" id="IPR033335">
    <property type="entry name" value="JUPITER"/>
</dbReference>
<dbReference type="PANTHER" id="PTHR34930">
    <property type="entry name" value="GEO05313P1"/>
    <property type="match status" value="1"/>
</dbReference>
<dbReference type="PANTHER" id="PTHR34930:SF2">
    <property type="entry name" value="MICROTUBULE-ASSOCIATED PROTEIN JUPITER"/>
    <property type="match status" value="1"/>
</dbReference>
<dbReference type="Pfam" id="PF17054">
    <property type="entry name" value="JUPITER"/>
    <property type="match status" value="2"/>
</dbReference>
<sequence>MATYAAFKHVELYNVGKAKKRVLRAPGGVSSDIFGSEQPQTPRNVKNLMASNIFSADTDAAQKNNVRQGAHRFYYIGETPRRGQKPVDSYSRLFGEPARPITPSKNHMKSNIPFGQNPNTAPLISKGNYNGKSGSVSSASSSVSSSTENLKINGGVRSEGNPVTGEGYKAGGTDYIQPAHLNGGSQVINKNRVPPGGYSSGLW</sequence>